<comment type="function">
    <text evidence="1">Responsible for the transport of dicarboxylates such as succinate, fumarate, and malate from the periplasm across the membrane.</text>
</comment>
<comment type="subcellular location">
    <subcellularLocation>
        <location evidence="1">Cell inner membrane</location>
        <topology evidence="1">Multi-pass membrane protein</topology>
    </subcellularLocation>
</comment>
<comment type="similarity">
    <text evidence="1">Belongs to the dicarboxylate/amino acid:cation symporter (DAACS) (TC 2.A.23) family.</text>
</comment>
<proteinExistence type="inferred from homology"/>
<sequence length="427" mass="45070">MRNKIFSSLYFQVLLAITLGVFLGHVYPDLGADMKPLGDGFVKLIKMIIAPVIFCTVVTGIAGMESMKAVGKTGAIALLYFEVVSTIALVIGLCVVNLLQPGVGMNVDPATLDASAISAYAEQAKSQGIIAFLLDVIPGSVIGAFASGNILQVLLFAVLFGFSLHHIGEKGKLIFNVIDSFSQVIFGIINMIMRLAPVGAFGAMAFTIGKYGIGSLVQLGQLIACFYVTCLLFIFMVLGSIARANGFSILRFISYIKEELLIVLGTSSSESVLPRMLVKMEALGCKKSVVGLVIPTGYSFNLDGTSIYLTMAAIFIAQATNTPLDLFQQITLLVVLLISSKGAAGVTGSGFIVLAATISAVGHLPLAGLALILGIDRFMSEARALTNLIGNGVATVVVARYCDQLDEQQMNEVLANPAAVQKVDQHG</sequence>
<reference key="1">
    <citation type="journal article" date="2008" name="BMC Genomics">
        <title>The genome of Aeromonas salmonicida subsp. salmonicida A449: insights into the evolution of a fish pathogen.</title>
        <authorList>
            <person name="Reith M.E."/>
            <person name="Singh R.K."/>
            <person name="Curtis B."/>
            <person name="Boyd J.M."/>
            <person name="Bouevitch A."/>
            <person name="Kimball J."/>
            <person name="Munholland J."/>
            <person name="Murphy C."/>
            <person name="Sarty D."/>
            <person name="Williams J."/>
            <person name="Nash J.H."/>
            <person name="Johnson S.C."/>
            <person name="Brown L.L."/>
        </authorList>
    </citation>
    <scope>NUCLEOTIDE SEQUENCE [LARGE SCALE GENOMIC DNA]</scope>
    <source>
        <strain>A449</strain>
    </source>
</reference>
<accession>A4SK68</accession>
<feature type="chain" id="PRO_1000067433" description="C4-dicarboxylate transport protein">
    <location>
        <begin position="1"/>
        <end position="427"/>
    </location>
</feature>
<feature type="transmembrane region" description="Helical" evidence="1">
    <location>
        <begin position="5"/>
        <end position="25"/>
    </location>
</feature>
<feature type="transmembrane region" description="Helical" evidence="1">
    <location>
        <begin position="44"/>
        <end position="64"/>
    </location>
</feature>
<feature type="transmembrane region" description="Helical" evidence="1">
    <location>
        <begin position="76"/>
        <end position="96"/>
    </location>
</feature>
<feature type="transmembrane region" description="Helical" evidence="1">
    <location>
        <begin position="142"/>
        <end position="162"/>
    </location>
</feature>
<feature type="transmembrane region" description="Helical" evidence="1">
    <location>
        <begin position="184"/>
        <end position="206"/>
    </location>
</feature>
<feature type="transmembrane region" description="Helical" evidence="1">
    <location>
        <begin position="222"/>
        <end position="242"/>
    </location>
</feature>
<feature type="transmembrane region" description="Helical" evidence="1">
    <location>
        <begin position="307"/>
        <end position="327"/>
    </location>
</feature>
<feature type="transmembrane region" description="Helical" evidence="1">
    <location>
        <begin position="330"/>
        <end position="350"/>
    </location>
</feature>
<feature type="transmembrane region" description="Helical" evidence="1">
    <location>
        <begin position="352"/>
        <end position="372"/>
    </location>
</feature>
<evidence type="ECO:0000255" key="1">
    <source>
        <dbReference type="HAMAP-Rule" id="MF_01300"/>
    </source>
</evidence>
<gene>
    <name evidence="1" type="primary">dctA</name>
    <name type="ordered locus">ASA_1180</name>
</gene>
<keyword id="KW-0997">Cell inner membrane</keyword>
<keyword id="KW-1003">Cell membrane</keyword>
<keyword id="KW-0472">Membrane</keyword>
<keyword id="KW-0769">Symport</keyword>
<keyword id="KW-0812">Transmembrane</keyword>
<keyword id="KW-1133">Transmembrane helix</keyword>
<keyword id="KW-0813">Transport</keyword>
<organism>
    <name type="scientific">Aeromonas salmonicida (strain A449)</name>
    <dbReference type="NCBI Taxonomy" id="382245"/>
    <lineage>
        <taxon>Bacteria</taxon>
        <taxon>Pseudomonadati</taxon>
        <taxon>Pseudomonadota</taxon>
        <taxon>Gammaproteobacteria</taxon>
        <taxon>Aeromonadales</taxon>
        <taxon>Aeromonadaceae</taxon>
        <taxon>Aeromonas</taxon>
    </lineage>
</organism>
<protein>
    <recommendedName>
        <fullName evidence="1">C4-dicarboxylate transport protein</fullName>
    </recommendedName>
</protein>
<name>DCTA_AERS4</name>
<dbReference type="EMBL" id="CP000644">
    <property type="protein sequence ID" value="ABO89290.1"/>
    <property type="molecule type" value="Genomic_DNA"/>
</dbReference>
<dbReference type="RefSeq" id="WP_005317001.1">
    <property type="nucleotide sequence ID" value="NC_009348.1"/>
</dbReference>
<dbReference type="SMR" id="A4SK68"/>
<dbReference type="STRING" id="29491.GCA_000820065_02896"/>
<dbReference type="KEGG" id="asa:ASA_1180"/>
<dbReference type="PATRIC" id="fig|382245.13.peg.1172"/>
<dbReference type="eggNOG" id="COG1301">
    <property type="taxonomic scope" value="Bacteria"/>
</dbReference>
<dbReference type="HOGENOM" id="CLU_019375_7_0_6"/>
<dbReference type="Proteomes" id="UP000000225">
    <property type="component" value="Chromosome"/>
</dbReference>
<dbReference type="GO" id="GO:0005886">
    <property type="term" value="C:plasma membrane"/>
    <property type="evidence" value="ECO:0007669"/>
    <property type="project" value="UniProtKB-SubCell"/>
</dbReference>
<dbReference type="GO" id="GO:0015138">
    <property type="term" value="F:fumarate transmembrane transporter activity"/>
    <property type="evidence" value="ECO:0007669"/>
    <property type="project" value="TreeGrafter"/>
</dbReference>
<dbReference type="GO" id="GO:0015366">
    <property type="term" value="F:malate:proton symporter activity"/>
    <property type="evidence" value="ECO:0007669"/>
    <property type="project" value="TreeGrafter"/>
</dbReference>
<dbReference type="GO" id="GO:0015141">
    <property type="term" value="F:succinate transmembrane transporter activity"/>
    <property type="evidence" value="ECO:0007669"/>
    <property type="project" value="TreeGrafter"/>
</dbReference>
<dbReference type="GO" id="GO:0070778">
    <property type="term" value="P:L-aspartate transmembrane transport"/>
    <property type="evidence" value="ECO:0007669"/>
    <property type="project" value="TreeGrafter"/>
</dbReference>
<dbReference type="FunFam" id="1.10.3860.10:FF:000001">
    <property type="entry name" value="C4-dicarboxylate transport protein"/>
    <property type="match status" value="1"/>
</dbReference>
<dbReference type="Gene3D" id="1.10.3860.10">
    <property type="entry name" value="Sodium:dicarboxylate symporter"/>
    <property type="match status" value="1"/>
</dbReference>
<dbReference type="HAMAP" id="MF_01300">
    <property type="entry name" value="C4_dicarb_transport"/>
    <property type="match status" value="1"/>
</dbReference>
<dbReference type="InterPro" id="IPR023954">
    <property type="entry name" value="C4_dicarb_transport"/>
</dbReference>
<dbReference type="InterPro" id="IPR001991">
    <property type="entry name" value="Na-dicarboxylate_symporter"/>
</dbReference>
<dbReference type="InterPro" id="IPR018107">
    <property type="entry name" value="Na-dicarboxylate_symporter_CS"/>
</dbReference>
<dbReference type="InterPro" id="IPR036458">
    <property type="entry name" value="Na:dicarbo_symporter_sf"/>
</dbReference>
<dbReference type="NCBIfam" id="NF002461">
    <property type="entry name" value="PRK01663.1"/>
    <property type="match status" value="1"/>
</dbReference>
<dbReference type="NCBIfam" id="NF009587">
    <property type="entry name" value="PRK13027.1"/>
    <property type="match status" value="1"/>
</dbReference>
<dbReference type="PANTHER" id="PTHR42865:SF1">
    <property type="entry name" value="AEROBIC C4-DICARBOXYLATE TRANSPORT PROTEIN"/>
    <property type="match status" value="1"/>
</dbReference>
<dbReference type="PANTHER" id="PTHR42865">
    <property type="entry name" value="PROTON/GLUTAMATE-ASPARTATE SYMPORTER"/>
    <property type="match status" value="1"/>
</dbReference>
<dbReference type="Pfam" id="PF00375">
    <property type="entry name" value="SDF"/>
    <property type="match status" value="1"/>
</dbReference>
<dbReference type="PRINTS" id="PR00173">
    <property type="entry name" value="EDTRNSPORT"/>
</dbReference>
<dbReference type="SUPFAM" id="SSF118215">
    <property type="entry name" value="Proton glutamate symport protein"/>
    <property type="match status" value="1"/>
</dbReference>
<dbReference type="PROSITE" id="PS00713">
    <property type="entry name" value="NA_DICARBOXYL_SYMP_1"/>
    <property type="match status" value="1"/>
</dbReference>
<dbReference type="PROSITE" id="PS00714">
    <property type="entry name" value="NA_DICARBOXYL_SYMP_2"/>
    <property type="match status" value="1"/>
</dbReference>